<gene>
    <name type="ordered locus">Os01g0868300</name>
    <name type="ordered locus">LOC_Os01g64820</name>
    <name type="ORF">P0677H08.20</name>
</gene>
<sequence length="1534" mass="169920">MDEGSADAGASGRRSRARGSEAVARSAALERLRAIRDGGARAAAAVQVRIEAPIYDTVAEEDYAALVARRRKDAGAFIVDDDGLGYADDGREEDWTHRTIHSSSDEGSDGEDGAPRKRKQPRPQSKRPPQQSAAAASLSAAAAMMGKQRLSSMFTSSVFRKPGSDRGRDSSLAADSIVDDVIAEFAPDDNDREERRRRVGRVCAPAPAPTTTAHIKAENVAVDTAMAFRSDNVFEAHEVSDHGNDMDMELKPDVEMEPKLDTPLGASAELANNSNSLEEPKQEANGEVKIEKVHRLNAKIKTEDSRNGDMASATAGWMKICGDGDNAGGEGAVAANSNTGVDESSEFELKDGALPFYILDAYEEPFGANSGTVYLFGKVEVGKRFHSCCVVVKNMQRCIYAIPSSSIFPRDTISRLEKNSTTSDSSPSLRASLHELASGLKSEIADKLSDFNVSNFAMTPVKRNYAFERTDLPNGEQYVLKINYPYKDPALPTDLRGQHFHALLGTNNSALELLLIKRKIKGPSWLSISKFLACPATQRVSWCKFEVTVDSPKDISVLMTSTTLEVPPVVVAAVNLKTIINEKHNVHEIVSASVICCHRVKIDSPMRSEDWQKRGMLSHFTVMRKLEGSIFPIGLSKESSDRNQKAGSNVLALESSERALLNRLMIELSKLDCDVLVGHNISGFDLDVLLHRAQTCKVPSNMWSKIGRLRRSVMPRLTKGNTLYGSGASPGIMSCIAGRLLCDTYLCSRDLLKEVSYSLTQLAETQLKKERKEVSPHDIPPMFQSSGALLKLVEYGETDACLALELMFHLSVLPLTRQLTNISGNLWGKTLQGSRAQRVEYLLLHAFHARKFIVPDKFARSKEFNSTKRKMNPDTEAARPDEADPSIDDEGHHVDQGKTKKGPSYAGGLVLEPKKGLYDKYVLLLDFNSLYPSIIQEYNICFTTVDRSADGNVPNLPASKTTGVLPELLKSLVERRRMVKSWLKTASGLKRQQFDIQQQALKLTANSMYGCLGFSNSRFYAKPLAELITLQGREILQNTVDLVQNNLNLEVIYGDTDSIMIHTGLDDISRAKGIAGKVIQEVNKKYRCLEIDLDGIYKRMLLLKKKKYAAIKVALDGSLRENIERKGLDMVRRDWSLLSKEIGDFCLNQILSGGSCDDVIESIHSSLVQVQEQMRGGQTELEKYIITKSLTKAPEDYPDAKNQPHVQVALRLKQNGYSGCSAGDTVPYIICSQQDSESTHSGGIAQRARHPEELKRNPDKWMIDIDYYLSQQIHPVVSRLCASIQGTSPARLAECLGLDSSKFQSRLTESDNQDTSSMLLSVIDDEDERYRGCEPLRLSCPSCSTTFDCPPVSSLIIGSSSGNVSNPNEGNDASINFWRRMRCPRCPDDTDESRVSPAVLANQMKRQADSFINLYYKGLLMCDDEGCKYSTHSVNLRVMGDSERGTICPNYPRCNGHLVRQYTEADLYRQLSYFCYVVDATRCLEKLDQKARLPFEKEFAALSQTINLALMEVQKIRDRCAFGWVQLKDLAISI</sequence>
<comment type="function">
    <text>Polymerase alpha in a complex with DNA primase is a replicative polymerase.</text>
</comment>
<comment type="catalytic activity">
    <reaction>
        <text>DNA(n) + a 2'-deoxyribonucleoside 5'-triphosphate = DNA(n+1) + diphosphate</text>
        <dbReference type="Rhea" id="RHEA:22508"/>
        <dbReference type="Rhea" id="RHEA-COMP:17339"/>
        <dbReference type="Rhea" id="RHEA-COMP:17340"/>
        <dbReference type="ChEBI" id="CHEBI:33019"/>
        <dbReference type="ChEBI" id="CHEBI:61560"/>
        <dbReference type="ChEBI" id="CHEBI:173112"/>
        <dbReference type="EC" id="2.7.7.7"/>
    </reaction>
</comment>
<comment type="subcellular location">
    <subcellularLocation>
        <location evidence="1">Nucleus</location>
    </subcellularLocation>
</comment>
<comment type="miscellaneous">
    <text>In eukaryotes there are five DNA polymerases: alpha, beta, gamma, delta, and epsilon which are responsible for different reactions of DNA synthesis.</text>
</comment>
<comment type="similarity">
    <text evidence="4">Belongs to the DNA polymerase type-B family.</text>
</comment>
<comment type="sequence caution" evidence="4">
    <conflict type="frameshift">
        <sequence resource="EMBL-CDS" id="BAA24573"/>
    </conflict>
</comment>
<comment type="sequence caution" evidence="4">
    <conflict type="erroneous gene model prediction">
        <sequence resource="EMBL-CDS" id="BAD81999"/>
    </conflict>
</comment>
<accession>O48653</accession>
<accession>A0A0P0VAW0</accession>
<accession>Q5N958</accession>
<feature type="chain" id="PRO_0000046438" description="DNA polymerase alpha catalytic subunit">
    <location>
        <begin position="1"/>
        <end position="1534"/>
    </location>
</feature>
<feature type="zinc finger region" description="CysA-type">
    <location>
        <begin position="1340"/>
        <end position="1386"/>
    </location>
</feature>
<feature type="region of interest" description="Disordered" evidence="3">
    <location>
        <begin position="1"/>
        <end position="23"/>
    </location>
</feature>
<feature type="region of interest" description="Disordered" evidence="3">
    <location>
        <begin position="96"/>
        <end position="141"/>
    </location>
</feature>
<feature type="region of interest" description="Disordered" evidence="3">
    <location>
        <begin position="864"/>
        <end position="905"/>
    </location>
</feature>
<feature type="short sequence motif" description="CysB motif">
    <location>
        <begin position="1422"/>
        <end position="1451"/>
    </location>
</feature>
<feature type="compositionally biased region" description="Low complexity" evidence="3">
    <location>
        <begin position="1"/>
        <end position="12"/>
    </location>
</feature>
<feature type="compositionally biased region" description="Basic residues" evidence="3">
    <location>
        <begin position="116"/>
        <end position="125"/>
    </location>
</feature>
<feature type="compositionally biased region" description="Low complexity" evidence="3">
    <location>
        <begin position="127"/>
        <end position="141"/>
    </location>
</feature>
<feature type="compositionally biased region" description="Basic and acidic residues" evidence="3">
    <location>
        <begin position="864"/>
        <end position="882"/>
    </location>
</feature>
<feature type="compositionally biased region" description="Basic and acidic residues" evidence="3">
    <location>
        <begin position="889"/>
        <end position="898"/>
    </location>
</feature>
<feature type="binding site" evidence="2">
    <location>
        <position position="1340"/>
    </location>
    <ligand>
        <name>Zn(2+)</name>
        <dbReference type="ChEBI" id="CHEBI:29105"/>
        <label>1</label>
    </ligand>
</feature>
<feature type="binding site" evidence="2">
    <location>
        <position position="1343"/>
    </location>
    <ligand>
        <name>Zn(2+)</name>
        <dbReference type="ChEBI" id="CHEBI:29105"/>
        <label>1</label>
    </ligand>
</feature>
<feature type="binding site" evidence="4">
    <location>
        <position position="1383"/>
    </location>
    <ligand>
        <name>Zn(2+)</name>
        <dbReference type="ChEBI" id="CHEBI:29105"/>
        <label>1</label>
    </ligand>
</feature>
<feature type="binding site" evidence="2">
    <location>
        <position position="1386"/>
    </location>
    <ligand>
        <name>Zn(2+)</name>
        <dbReference type="ChEBI" id="CHEBI:29105"/>
        <label>1</label>
    </ligand>
</feature>
<feature type="binding site" evidence="2">
    <location>
        <position position="1422"/>
    </location>
    <ligand>
        <name>Zn(2+)</name>
        <dbReference type="ChEBI" id="CHEBI:29105"/>
        <label>2</label>
    </ligand>
</feature>
<feature type="binding site" evidence="2">
    <location>
        <position position="1427"/>
    </location>
    <ligand>
        <name>Zn(2+)</name>
        <dbReference type="ChEBI" id="CHEBI:29105"/>
        <label>2</label>
    </ligand>
</feature>
<feature type="binding site" evidence="2">
    <location>
        <position position="1448"/>
    </location>
    <ligand>
        <name>Zn(2+)</name>
        <dbReference type="ChEBI" id="CHEBI:29105"/>
        <label>2</label>
    </ligand>
</feature>
<feature type="binding site" evidence="4">
    <location>
        <position position="1454"/>
    </location>
    <ligand>
        <name>Zn(2+)</name>
        <dbReference type="ChEBI" id="CHEBI:29105"/>
        <label>2</label>
    </ligand>
</feature>
<keyword id="KW-0235">DNA replication</keyword>
<keyword id="KW-0238">DNA-binding</keyword>
<keyword id="KW-0239">DNA-directed DNA polymerase</keyword>
<keyword id="KW-0479">Metal-binding</keyword>
<keyword id="KW-0548">Nucleotidyltransferase</keyword>
<keyword id="KW-0539">Nucleus</keyword>
<keyword id="KW-1185">Reference proteome</keyword>
<keyword id="KW-0808">Transferase</keyword>
<keyword id="KW-0862">Zinc</keyword>
<keyword id="KW-0863">Zinc-finger</keyword>
<dbReference type="EC" id="2.7.7.7"/>
<dbReference type="EMBL" id="AB004461">
    <property type="protein sequence ID" value="BAA24573.1"/>
    <property type="status" value="ALT_FRAME"/>
    <property type="molecule type" value="mRNA"/>
</dbReference>
<dbReference type="EMBL" id="AP003286">
    <property type="protein sequence ID" value="BAD81999.1"/>
    <property type="status" value="ALT_SEQ"/>
    <property type="molecule type" value="Genomic_DNA"/>
</dbReference>
<dbReference type="EMBL" id="AP014957">
    <property type="protein sequence ID" value="BAS75408.1"/>
    <property type="molecule type" value="Genomic_DNA"/>
</dbReference>
<dbReference type="RefSeq" id="XP_015624973.1">
    <property type="nucleotide sequence ID" value="XM_015769487.1"/>
</dbReference>
<dbReference type="SMR" id="O48653"/>
<dbReference type="FunCoup" id="O48653">
    <property type="interactions" value="2257"/>
</dbReference>
<dbReference type="STRING" id="39947.O48653"/>
<dbReference type="PaxDb" id="39947-O48653"/>
<dbReference type="EnsemblPlants" id="Os01t0868300-01">
    <property type="protein sequence ID" value="Os01t0868300-01"/>
    <property type="gene ID" value="Os01g0868300"/>
</dbReference>
<dbReference type="Gramene" id="Os01t0868300-01">
    <property type="protein sequence ID" value="Os01t0868300-01"/>
    <property type="gene ID" value="Os01g0868300"/>
</dbReference>
<dbReference type="eggNOG" id="KOG0970">
    <property type="taxonomic scope" value="Eukaryota"/>
</dbReference>
<dbReference type="HOGENOM" id="CLU_001718_0_1_1"/>
<dbReference type="InParanoid" id="O48653"/>
<dbReference type="OMA" id="MTKMNVG"/>
<dbReference type="OrthoDB" id="6755010at2759"/>
<dbReference type="PlantReactome" id="R-OSA-9645850">
    <property type="pathway name" value="Activation of pre-replication complex"/>
</dbReference>
<dbReference type="PlantReactome" id="R-OSA-9675782">
    <property type="pathway name" value="Maturation"/>
</dbReference>
<dbReference type="PlantReactome" id="R-OSA-9675815">
    <property type="pathway name" value="Leading strand synthesis"/>
</dbReference>
<dbReference type="PlantReactome" id="R-OSA-9675824">
    <property type="pathway name" value="DNA replication Initiation"/>
</dbReference>
<dbReference type="PlantReactome" id="R-OSA-9675885">
    <property type="pathway name" value="Lagging strand synthesis"/>
</dbReference>
<dbReference type="Proteomes" id="UP000000763">
    <property type="component" value="Chromosome 1"/>
</dbReference>
<dbReference type="Proteomes" id="UP000059680">
    <property type="component" value="Chromosome 1"/>
</dbReference>
<dbReference type="GO" id="GO:0005658">
    <property type="term" value="C:alpha DNA polymerase:primase complex"/>
    <property type="evidence" value="ECO:0000318"/>
    <property type="project" value="GO_Central"/>
</dbReference>
<dbReference type="GO" id="GO:0005634">
    <property type="term" value="C:nucleus"/>
    <property type="evidence" value="ECO:0000314"/>
    <property type="project" value="Gramene"/>
</dbReference>
<dbReference type="GO" id="GO:0003682">
    <property type="term" value="F:chromatin binding"/>
    <property type="evidence" value="ECO:0000318"/>
    <property type="project" value="GO_Central"/>
</dbReference>
<dbReference type="GO" id="GO:0003688">
    <property type="term" value="F:DNA replication origin binding"/>
    <property type="evidence" value="ECO:0000318"/>
    <property type="project" value="GO_Central"/>
</dbReference>
<dbReference type="GO" id="GO:0003887">
    <property type="term" value="F:DNA-directed DNA polymerase activity"/>
    <property type="evidence" value="ECO:0000314"/>
    <property type="project" value="Gramene"/>
</dbReference>
<dbReference type="GO" id="GO:0003899">
    <property type="term" value="F:DNA-directed RNA polymerase activity"/>
    <property type="evidence" value="ECO:0000314"/>
    <property type="project" value="Gramene"/>
</dbReference>
<dbReference type="GO" id="GO:0000166">
    <property type="term" value="F:nucleotide binding"/>
    <property type="evidence" value="ECO:0007669"/>
    <property type="project" value="InterPro"/>
</dbReference>
<dbReference type="GO" id="GO:0003697">
    <property type="term" value="F:single-stranded DNA binding"/>
    <property type="evidence" value="ECO:0000318"/>
    <property type="project" value="GO_Central"/>
</dbReference>
<dbReference type="GO" id="GO:0008270">
    <property type="term" value="F:zinc ion binding"/>
    <property type="evidence" value="ECO:0007669"/>
    <property type="project" value="UniProtKB-KW"/>
</dbReference>
<dbReference type="GO" id="GO:0006270">
    <property type="term" value="P:DNA replication initiation"/>
    <property type="evidence" value="ECO:0000314"/>
    <property type="project" value="Gramene"/>
</dbReference>
<dbReference type="GO" id="GO:0006273">
    <property type="term" value="P:lagging strand elongation"/>
    <property type="evidence" value="ECO:0000314"/>
    <property type="project" value="Gramene"/>
</dbReference>
<dbReference type="GO" id="GO:0006272">
    <property type="term" value="P:leading strand elongation"/>
    <property type="evidence" value="ECO:0000318"/>
    <property type="project" value="GO_Central"/>
</dbReference>
<dbReference type="GO" id="GO:0009965">
    <property type="term" value="P:leaf morphogenesis"/>
    <property type="evidence" value="ECO:0007669"/>
    <property type="project" value="EnsemblPlants"/>
</dbReference>
<dbReference type="GO" id="GO:1902975">
    <property type="term" value="P:mitotic DNA replication initiation"/>
    <property type="evidence" value="ECO:0000318"/>
    <property type="project" value="GO_Central"/>
</dbReference>
<dbReference type="CDD" id="cd05776">
    <property type="entry name" value="DNA_polB_alpha_exo"/>
    <property type="match status" value="1"/>
</dbReference>
<dbReference type="CDD" id="cd05532">
    <property type="entry name" value="POLBc_alpha"/>
    <property type="match status" value="1"/>
</dbReference>
<dbReference type="FunFam" id="1.10.132.60:FF:000004">
    <property type="entry name" value="DNA polymerase"/>
    <property type="match status" value="1"/>
</dbReference>
<dbReference type="FunFam" id="1.10.287.690:FF:000004">
    <property type="entry name" value="DNA polymerase"/>
    <property type="match status" value="1"/>
</dbReference>
<dbReference type="FunFam" id="1.10.3200.20:FF:000003">
    <property type="entry name" value="DNA polymerase"/>
    <property type="match status" value="1"/>
</dbReference>
<dbReference type="FunFam" id="3.30.420.10:FF:000043">
    <property type="entry name" value="DNA polymerase"/>
    <property type="match status" value="1"/>
</dbReference>
<dbReference type="FunFam" id="3.30.70.2820:FF:000002">
    <property type="entry name" value="DNA polymerase"/>
    <property type="match status" value="1"/>
</dbReference>
<dbReference type="Gene3D" id="2.40.50.730">
    <property type="match status" value="1"/>
</dbReference>
<dbReference type="Gene3D" id="3.30.70.2820">
    <property type="match status" value="1"/>
</dbReference>
<dbReference type="Gene3D" id="1.10.3200.20">
    <property type="entry name" value="DNA Polymerase alpha, zinc finger"/>
    <property type="match status" value="1"/>
</dbReference>
<dbReference type="Gene3D" id="1.10.132.60">
    <property type="entry name" value="DNA polymerase family B, C-terminal domain"/>
    <property type="match status" value="1"/>
</dbReference>
<dbReference type="Gene3D" id="1.10.287.690">
    <property type="entry name" value="Helix hairpin bin"/>
    <property type="match status" value="1"/>
</dbReference>
<dbReference type="Gene3D" id="3.90.1600.10">
    <property type="entry name" value="Palm domain of DNA polymerase"/>
    <property type="match status" value="1"/>
</dbReference>
<dbReference type="Gene3D" id="3.30.420.10">
    <property type="entry name" value="Ribonuclease H-like superfamily/Ribonuclease H"/>
    <property type="match status" value="1"/>
</dbReference>
<dbReference type="InterPro" id="IPR006172">
    <property type="entry name" value="DNA-dir_DNA_pol_B"/>
</dbReference>
<dbReference type="InterPro" id="IPR017964">
    <property type="entry name" value="DNA-dir_DNA_pol_B_CS"/>
</dbReference>
<dbReference type="InterPro" id="IPR006133">
    <property type="entry name" value="DNA-dir_DNA_pol_B_exonuc"/>
</dbReference>
<dbReference type="InterPro" id="IPR006134">
    <property type="entry name" value="DNA-dir_DNA_pol_B_multi_dom"/>
</dbReference>
<dbReference type="InterPro" id="IPR043502">
    <property type="entry name" value="DNA/RNA_pol_sf"/>
</dbReference>
<dbReference type="InterPro" id="IPR024647">
    <property type="entry name" value="DNA_pol_a_cat_su_N"/>
</dbReference>
<dbReference type="InterPro" id="IPR042087">
    <property type="entry name" value="DNA_pol_B_thumb"/>
</dbReference>
<dbReference type="InterPro" id="IPR023211">
    <property type="entry name" value="DNA_pol_palm_dom_sf"/>
</dbReference>
<dbReference type="InterPro" id="IPR038256">
    <property type="entry name" value="Pol_alpha_znc_sf"/>
</dbReference>
<dbReference type="InterPro" id="IPR045846">
    <property type="entry name" value="POLBc_alpha"/>
</dbReference>
<dbReference type="InterPro" id="IPR012337">
    <property type="entry name" value="RNaseH-like_sf"/>
</dbReference>
<dbReference type="InterPro" id="IPR036397">
    <property type="entry name" value="RNaseH_sf"/>
</dbReference>
<dbReference type="InterPro" id="IPR015088">
    <property type="entry name" value="Znf_DNA-dir_DNA_pol_B_alpha"/>
</dbReference>
<dbReference type="NCBIfam" id="TIGR00592">
    <property type="entry name" value="pol2"/>
    <property type="match status" value="1"/>
</dbReference>
<dbReference type="PANTHER" id="PTHR45861">
    <property type="entry name" value="DNA POLYMERASE ALPHA CATALYTIC SUBUNIT"/>
    <property type="match status" value="1"/>
</dbReference>
<dbReference type="PANTHER" id="PTHR45861:SF1">
    <property type="entry name" value="DNA POLYMERASE ALPHA CATALYTIC SUBUNIT"/>
    <property type="match status" value="1"/>
</dbReference>
<dbReference type="Pfam" id="PF12254">
    <property type="entry name" value="DNA_pol_alpha_N"/>
    <property type="match status" value="1"/>
</dbReference>
<dbReference type="Pfam" id="PF00136">
    <property type="entry name" value="DNA_pol_B"/>
    <property type="match status" value="1"/>
</dbReference>
<dbReference type="Pfam" id="PF03104">
    <property type="entry name" value="DNA_pol_B_exo1"/>
    <property type="match status" value="1"/>
</dbReference>
<dbReference type="Pfam" id="PF08996">
    <property type="entry name" value="zf-DNA_Pol"/>
    <property type="match status" value="1"/>
</dbReference>
<dbReference type="PRINTS" id="PR00106">
    <property type="entry name" value="DNAPOLB"/>
</dbReference>
<dbReference type="SMART" id="SM00486">
    <property type="entry name" value="POLBc"/>
    <property type="match status" value="1"/>
</dbReference>
<dbReference type="SUPFAM" id="SSF56672">
    <property type="entry name" value="DNA/RNA polymerases"/>
    <property type="match status" value="1"/>
</dbReference>
<dbReference type="SUPFAM" id="SSF53098">
    <property type="entry name" value="Ribonuclease H-like"/>
    <property type="match status" value="1"/>
</dbReference>
<dbReference type="PROSITE" id="PS00116">
    <property type="entry name" value="DNA_POLYMERASE_B"/>
    <property type="match status" value="1"/>
</dbReference>
<organism>
    <name type="scientific">Oryza sativa subsp. japonica</name>
    <name type="common">Rice</name>
    <dbReference type="NCBI Taxonomy" id="39947"/>
    <lineage>
        <taxon>Eukaryota</taxon>
        <taxon>Viridiplantae</taxon>
        <taxon>Streptophyta</taxon>
        <taxon>Embryophyta</taxon>
        <taxon>Tracheophyta</taxon>
        <taxon>Spermatophyta</taxon>
        <taxon>Magnoliopsida</taxon>
        <taxon>Liliopsida</taxon>
        <taxon>Poales</taxon>
        <taxon>Poaceae</taxon>
        <taxon>BOP clade</taxon>
        <taxon>Oryzoideae</taxon>
        <taxon>Oryzeae</taxon>
        <taxon>Oryzinae</taxon>
        <taxon>Oryza</taxon>
        <taxon>Oryza sativa</taxon>
    </lineage>
</organism>
<proteinExistence type="evidence at transcript level"/>
<reference key="1">
    <citation type="journal article" date="1997" name="Genes Cells">
        <title>Molecular cloning of the cDNA for the catalytic subunit of plant DNA polymerase alpha and its cell-cycle dependent expression.</title>
        <authorList>
            <person name="Yokoi M."/>
            <person name="Ito M."/>
            <person name="Izumi M."/>
            <person name="Miyazawa H."/>
            <person name="Nakai H."/>
            <person name="Hanaoka F."/>
        </authorList>
    </citation>
    <scope>NUCLEOTIDE SEQUENCE [MRNA]</scope>
    <source>
        <strain>cv. Sasanishiki</strain>
    </source>
</reference>
<reference key="2">
    <citation type="journal article" date="2002" name="Nature">
        <title>The genome sequence and structure of rice chromosome 1.</title>
        <authorList>
            <person name="Sasaki T."/>
            <person name="Matsumoto T."/>
            <person name="Yamamoto K."/>
            <person name="Sakata K."/>
            <person name="Baba T."/>
            <person name="Katayose Y."/>
            <person name="Wu J."/>
            <person name="Niimura Y."/>
            <person name="Cheng Z."/>
            <person name="Nagamura Y."/>
            <person name="Antonio B.A."/>
            <person name="Kanamori H."/>
            <person name="Hosokawa S."/>
            <person name="Masukawa M."/>
            <person name="Arikawa K."/>
            <person name="Chiden Y."/>
            <person name="Hayashi M."/>
            <person name="Okamoto M."/>
            <person name="Ando T."/>
            <person name="Aoki H."/>
            <person name="Arita K."/>
            <person name="Hamada M."/>
            <person name="Harada C."/>
            <person name="Hijishita S."/>
            <person name="Honda M."/>
            <person name="Ichikawa Y."/>
            <person name="Idonuma A."/>
            <person name="Iijima M."/>
            <person name="Ikeda M."/>
            <person name="Ikeno M."/>
            <person name="Ito S."/>
            <person name="Ito T."/>
            <person name="Ito Y."/>
            <person name="Ito Y."/>
            <person name="Iwabuchi A."/>
            <person name="Kamiya K."/>
            <person name="Karasawa W."/>
            <person name="Katagiri S."/>
            <person name="Kikuta A."/>
            <person name="Kobayashi N."/>
            <person name="Kono I."/>
            <person name="Machita K."/>
            <person name="Maehara T."/>
            <person name="Mizuno H."/>
            <person name="Mizubayashi T."/>
            <person name="Mukai Y."/>
            <person name="Nagasaki H."/>
            <person name="Nakashima M."/>
            <person name="Nakama Y."/>
            <person name="Nakamichi Y."/>
            <person name="Nakamura M."/>
            <person name="Namiki N."/>
            <person name="Negishi M."/>
            <person name="Ohta I."/>
            <person name="Ono N."/>
            <person name="Saji S."/>
            <person name="Sakai K."/>
            <person name="Shibata M."/>
            <person name="Shimokawa T."/>
            <person name="Shomura A."/>
            <person name="Song J."/>
            <person name="Takazaki Y."/>
            <person name="Terasawa K."/>
            <person name="Tsuji K."/>
            <person name="Waki K."/>
            <person name="Yamagata H."/>
            <person name="Yamane H."/>
            <person name="Yoshiki S."/>
            <person name="Yoshihara R."/>
            <person name="Yukawa K."/>
            <person name="Zhong H."/>
            <person name="Iwama H."/>
            <person name="Endo T."/>
            <person name="Ito H."/>
            <person name="Hahn J.H."/>
            <person name="Kim H.-I."/>
            <person name="Eun M.-Y."/>
            <person name="Yano M."/>
            <person name="Jiang J."/>
            <person name="Gojobori T."/>
        </authorList>
    </citation>
    <scope>NUCLEOTIDE SEQUENCE [LARGE SCALE GENOMIC DNA]</scope>
    <source>
        <strain>cv. Nipponbare</strain>
    </source>
</reference>
<reference key="3">
    <citation type="journal article" date="2005" name="Nature">
        <title>The map-based sequence of the rice genome.</title>
        <authorList>
            <consortium name="International rice genome sequencing project (IRGSP)"/>
        </authorList>
    </citation>
    <scope>NUCLEOTIDE SEQUENCE [LARGE SCALE GENOMIC DNA]</scope>
    <source>
        <strain>cv. Nipponbare</strain>
    </source>
</reference>
<reference key="4">
    <citation type="journal article" date="2013" name="Rice">
        <title>Improvement of the Oryza sativa Nipponbare reference genome using next generation sequence and optical map data.</title>
        <authorList>
            <person name="Kawahara Y."/>
            <person name="de la Bastide M."/>
            <person name="Hamilton J.P."/>
            <person name="Kanamori H."/>
            <person name="McCombie W.R."/>
            <person name="Ouyang S."/>
            <person name="Schwartz D.C."/>
            <person name="Tanaka T."/>
            <person name="Wu J."/>
            <person name="Zhou S."/>
            <person name="Childs K.L."/>
            <person name="Davidson R.M."/>
            <person name="Lin H."/>
            <person name="Quesada-Ocampo L."/>
            <person name="Vaillancourt B."/>
            <person name="Sakai H."/>
            <person name="Lee S.S."/>
            <person name="Kim J."/>
            <person name="Numa H."/>
            <person name="Itoh T."/>
            <person name="Buell C.R."/>
            <person name="Matsumoto T."/>
        </authorList>
    </citation>
    <scope>GENOME REANNOTATION</scope>
    <source>
        <strain>cv. Nipponbare</strain>
    </source>
</reference>
<evidence type="ECO:0000250" key="1"/>
<evidence type="ECO:0000250" key="2">
    <source>
        <dbReference type="UniProtKB" id="P09884"/>
    </source>
</evidence>
<evidence type="ECO:0000256" key="3">
    <source>
        <dbReference type="SAM" id="MobiDB-lite"/>
    </source>
</evidence>
<evidence type="ECO:0000305" key="4"/>
<name>DPOLA_ORYSJ</name>
<protein>
    <recommendedName>
        <fullName>DNA polymerase alpha catalytic subunit</fullName>
        <ecNumber>2.7.7.7</ecNumber>
    </recommendedName>
</protein>